<sequence length="98" mass="11301">MSSRYLLSPAAQAHLEEIWDCTYDRWGVDQAEQYLRELQHAIDRAAANPRIGRACDEIRPGYRKLSAGSHTLFYRVTGEGTIDVVRVLHQRMDVDRNL</sequence>
<feature type="chain" id="PRO_0000408372" description="Toxin ParE1">
    <location>
        <begin position="1"/>
        <end position="98"/>
    </location>
</feature>
<feature type="strand" evidence="3">
    <location>
        <begin position="5"/>
        <end position="7"/>
    </location>
</feature>
<feature type="helix" evidence="3">
    <location>
        <begin position="9"/>
        <end position="26"/>
    </location>
</feature>
<feature type="helix" evidence="3">
    <location>
        <begin position="28"/>
        <end position="47"/>
    </location>
</feature>
<feature type="helix" evidence="3">
    <location>
        <begin position="49"/>
        <end position="51"/>
    </location>
</feature>
<feature type="strand" evidence="3">
    <location>
        <begin position="52"/>
        <end position="54"/>
    </location>
</feature>
<feature type="turn" evidence="3">
    <location>
        <begin position="56"/>
        <end position="58"/>
    </location>
</feature>
<feature type="strand" evidence="3">
    <location>
        <begin position="63"/>
        <end position="67"/>
    </location>
</feature>
<feature type="strand" evidence="3">
    <location>
        <begin position="70"/>
        <end position="76"/>
    </location>
</feature>
<feature type="strand" evidence="3">
    <location>
        <begin position="82"/>
        <end position="89"/>
    </location>
</feature>
<feature type="helix" evidence="3">
    <location>
        <begin position="90"/>
        <end position="92"/>
    </location>
</feature>
<proteinExistence type="evidence at protein level"/>
<name>PARE1_MYCTU</name>
<protein>
    <recommendedName>
        <fullName>Toxin ParE1</fullName>
    </recommendedName>
</protein>
<gene>
    <name type="primary">parE1</name>
    <name type="ordered locus">Rv1959c</name>
</gene>
<reference key="1">
    <citation type="journal article" date="1998" name="Nature">
        <title>Deciphering the biology of Mycobacterium tuberculosis from the complete genome sequence.</title>
        <authorList>
            <person name="Cole S.T."/>
            <person name="Brosch R."/>
            <person name="Parkhill J."/>
            <person name="Garnier T."/>
            <person name="Churcher C.M."/>
            <person name="Harris D.E."/>
            <person name="Gordon S.V."/>
            <person name="Eiglmeier K."/>
            <person name="Gas S."/>
            <person name="Barry C.E. III"/>
            <person name="Tekaia F."/>
            <person name="Badcock K."/>
            <person name="Basham D."/>
            <person name="Brown D."/>
            <person name="Chillingworth T."/>
            <person name="Connor R."/>
            <person name="Davies R.M."/>
            <person name="Devlin K."/>
            <person name="Feltwell T."/>
            <person name="Gentles S."/>
            <person name="Hamlin N."/>
            <person name="Holroyd S."/>
            <person name="Hornsby T."/>
            <person name="Jagels K."/>
            <person name="Krogh A."/>
            <person name="McLean J."/>
            <person name="Moule S."/>
            <person name="Murphy L.D."/>
            <person name="Oliver S."/>
            <person name="Osborne J."/>
            <person name="Quail M.A."/>
            <person name="Rajandream M.A."/>
            <person name="Rogers J."/>
            <person name="Rutter S."/>
            <person name="Seeger K."/>
            <person name="Skelton S."/>
            <person name="Squares S."/>
            <person name="Squares R."/>
            <person name="Sulston J.E."/>
            <person name="Taylor K."/>
            <person name="Whitehead S."/>
            <person name="Barrell B.G."/>
        </authorList>
    </citation>
    <scope>NUCLEOTIDE SEQUENCE [LARGE SCALE GENOMIC DNA]</scope>
    <source>
        <strain>ATCC 25618 / H37Rv</strain>
    </source>
</reference>
<reference key="2">
    <citation type="journal article" date="2005" name="Nucleic Acids Res.">
        <title>Toxin-antitoxin loci are highly abundant in free-living but lost from host-associated prokaryotes.</title>
        <authorList>
            <person name="Pandey D.P."/>
            <person name="Gerdes K."/>
        </authorList>
    </citation>
    <scope>POSSIBLE FUNCTION</scope>
    <source>
        <strain>ATCC 25618 / H37Rv</strain>
    </source>
</reference>
<reference key="3">
    <citation type="journal article" date="2009" name="FEMS Microbiol. Lett.">
        <title>Killing activity and rescue function of genome-wide toxin-antitoxin loci of Mycobacterium tuberculosis.</title>
        <authorList>
            <person name="Gupta A."/>
        </authorList>
    </citation>
    <scope>EXPRESSION IN E.COLI</scope>
    <scope>FUNCTION AS A TOXIN</scope>
    <source>
        <strain>ATCC 25618 / H37Rv</strain>
    </source>
</reference>
<reference key="4">
    <citation type="journal article" date="2011" name="Mol. Cell. Proteomics">
        <title>Proteogenomic analysis of Mycobacterium tuberculosis by high resolution mass spectrometry.</title>
        <authorList>
            <person name="Kelkar D.S."/>
            <person name="Kumar D."/>
            <person name="Kumar P."/>
            <person name="Balakrishnan L."/>
            <person name="Muthusamy B."/>
            <person name="Yadav A.K."/>
            <person name="Shrivastava P."/>
            <person name="Marimuthu A."/>
            <person name="Anand S."/>
            <person name="Sundaram H."/>
            <person name="Kingsbury R."/>
            <person name="Harsha H.C."/>
            <person name="Nair B."/>
            <person name="Prasad T.S."/>
            <person name="Chauhan D.S."/>
            <person name="Katoch K."/>
            <person name="Katoch V.M."/>
            <person name="Kumar P."/>
            <person name="Chaerkady R."/>
            <person name="Ramachandran S."/>
            <person name="Dash D."/>
            <person name="Pandey A."/>
        </authorList>
    </citation>
    <scope>IDENTIFICATION BY MASS SPECTROMETRY [LARGE SCALE ANALYSIS]</scope>
    <source>
        <strain>ATCC 25618 / H37Rv</strain>
    </source>
</reference>
<comment type="function">
    <text evidence="1">Toxic component of a type II toxin-antitoxin (TA) system. Upon expression in E.coli inhibits cell growth and colony formation. Its toxic effect is neutralized by coexpression with cognate antitoxin ParD1.</text>
</comment>
<comment type="similarity">
    <text evidence="2">Belongs to the RelE toxin family.</text>
</comment>
<dbReference type="EMBL" id="AL123456">
    <property type="protein sequence ID" value="CCP44727.1"/>
    <property type="molecule type" value="Genomic_DNA"/>
</dbReference>
<dbReference type="PIR" id="C70639">
    <property type="entry name" value="C70639"/>
</dbReference>
<dbReference type="RefSeq" id="NP_216475.1">
    <property type="nucleotide sequence ID" value="NC_000962.3"/>
</dbReference>
<dbReference type="RefSeq" id="WP_003409896.1">
    <property type="nucleotide sequence ID" value="NZ_NVQJ01000048.1"/>
</dbReference>
<dbReference type="PDB" id="8C24">
    <property type="method" value="X-ray"/>
    <property type="resolution" value="2.10 A"/>
    <property type="chains" value="A/B=1-98"/>
</dbReference>
<dbReference type="PDBsum" id="8C24"/>
<dbReference type="SMR" id="P9WHG7"/>
<dbReference type="STRING" id="83332.Rv1959c"/>
<dbReference type="PaxDb" id="83332-Rv1959c"/>
<dbReference type="DNASU" id="885958"/>
<dbReference type="GeneID" id="885958"/>
<dbReference type="KEGG" id="mtu:Rv1959c"/>
<dbReference type="KEGG" id="mtv:RVBD_1959c"/>
<dbReference type="TubercuList" id="Rv1959c"/>
<dbReference type="eggNOG" id="COG3668">
    <property type="taxonomic scope" value="Bacteria"/>
</dbReference>
<dbReference type="InParanoid" id="P9WHG7"/>
<dbReference type="OrthoDB" id="7173315at2"/>
<dbReference type="PhylomeDB" id="P9WHG7"/>
<dbReference type="Proteomes" id="UP000001584">
    <property type="component" value="Chromosome"/>
</dbReference>
<dbReference type="GO" id="GO:0044003">
    <property type="term" value="P:symbiont-mediated perturbation of host process"/>
    <property type="evidence" value="ECO:0000315"/>
    <property type="project" value="MTBBASE"/>
</dbReference>
<dbReference type="Gene3D" id="3.30.2310.20">
    <property type="entry name" value="RelE-like"/>
    <property type="match status" value="1"/>
</dbReference>
<dbReference type="InterPro" id="IPR028344">
    <property type="entry name" value="ParE1/4"/>
</dbReference>
<dbReference type="InterPro" id="IPR007712">
    <property type="entry name" value="RelE/ParE_toxin"/>
</dbReference>
<dbReference type="InterPro" id="IPR035093">
    <property type="entry name" value="RelE/ParE_toxin_dom_sf"/>
</dbReference>
<dbReference type="InterPro" id="IPR051803">
    <property type="entry name" value="TA_system_RelE-like_toxin"/>
</dbReference>
<dbReference type="PANTHER" id="PTHR33755:SF9">
    <property type="entry name" value="TOXIN PARE1"/>
    <property type="match status" value="1"/>
</dbReference>
<dbReference type="PANTHER" id="PTHR33755">
    <property type="entry name" value="TOXIN PARE1-RELATED"/>
    <property type="match status" value="1"/>
</dbReference>
<dbReference type="Pfam" id="PF05016">
    <property type="entry name" value="ParE_toxin"/>
    <property type="match status" value="1"/>
</dbReference>
<dbReference type="PIRSF" id="PIRSF029218">
    <property type="entry name" value="ParE"/>
    <property type="match status" value="1"/>
</dbReference>
<organism>
    <name type="scientific">Mycobacterium tuberculosis (strain ATCC 25618 / H37Rv)</name>
    <dbReference type="NCBI Taxonomy" id="83332"/>
    <lineage>
        <taxon>Bacteria</taxon>
        <taxon>Bacillati</taxon>
        <taxon>Actinomycetota</taxon>
        <taxon>Actinomycetes</taxon>
        <taxon>Mycobacteriales</taxon>
        <taxon>Mycobacteriaceae</taxon>
        <taxon>Mycobacterium</taxon>
        <taxon>Mycobacterium tuberculosis complex</taxon>
    </lineage>
</organism>
<accession>P9WHG7</accession>
<accession>L0T873</accession>
<accession>P95255</accession>
<accession>Q7D7P6</accession>
<keyword id="KW-0002">3D-structure</keyword>
<keyword id="KW-1185">Reference proteome</keyword>
<keyword id="KW-1277">Toxin-antitoxin system</keyword>
<evidence type="ECO:0000269" key="1">
    <source>
    </source>
</evidence>
<evidence type="ECO:0000305" key="2"/>
<evidence type="ECO:0007829" key="3">
    <source>
        <dbReference type="PDB" id="8C24"/>
    </source>
</evidence>